<comment type="function">
    <text>Core component of nucleosome. Nucleosomes wrap and compact DNA into chromatin, limiting DNA accessibility to the cellular machineries which require DNA as a template. Histones thereby play a central role in transcription regulation, DNA repair, DNA replication and chromosomal stability. DNA accessibility is regulated via a complex set of post-translational modifications of histones, also called histone code, and nucleosome remodeling.</text>
</comment>
<comment type="subunit">
    <text>The nucleosome is a histone octamer containing two molecules each of H2A, H2B, H3 and H4 assembled in one H3-H4 heterotetramer and two H2A-H2B heterodimers. The octamer wraps approximately 147 bp of DNA.</text>
</comment>
<comment type="subcellular location">
    <subcellularLocation>
        <location>Nucleus</location>
    </subcellularLocation>
    <subcellularLocation>
        <location>Chromosome</location>
    </subcellularLocation>
</comment>
<comment type="PTM">
    <text evidence="1">Monoubiquitination of Lys-119 gives a specific tag for epigenetic transcriptional repression.</text>
</comment>
<comment type="PTM">
    <text evidence="1">Phosphorylation on Ser-2 is enhanced during mitosis. Phosphorylation on Ser-2 directly represses transcription (By similarity).</text>
</comment>
<comment type="similarity">
    <text evidence="3">Belongs to the histone H2A family.</text>
</comment>
<evidence type="ECO:0000250" key="1"/>
<evidence type="ECO:0000256" key="2">
    <source>
        <dbReference type="SAM" id="MobiDB-lite"/>
    </source>
</evidence>
<evidence type="ECO:0000305" key="3"/>
<dbReference type="EMBL" id="AF378198">
    <property type="protein sequence ID" value="AAK58063.1"/>
    <property type="molecule type" value="Genomic_DNA"/>
</dbReference>
<dbReference type="SMR" id="P84056"/>
<dbReference type="GO" id="GO:0000786">
    <property type="term" value="C:nucleosome"/>
    <property type="evidence" value="ECO:0007669"/>
    <property type="project" value="UniProtKB-KW"/>
</dbReference>
<dbReference type="GO" id="GO:0005634">
    <property type="term" value="C:nucleus"/>
    <property type="evidence" value="ECO:0007669"/>
    <property type="project" value="UniProtKB-SubCell"/>
</dbReference>
<dbReference type="GO" id="GO:0003677">
    <property type="term" value="F:DNA binding"/>
    <property type="evidence" value="ECO:0007669"/>
    <property type="project" value="UniProtKB-KW"/>
</dbReference>
<dbReference type="GO" id="GO:0046982">
    <property type="term" value="F:protein heterodimerization activity"/>
    <property type="evidence" value="ECO:0007669"/>
    <property type="project" value="InterPro"/>
</dbReference>
<dbReference type="GO" id="GO:0030527">
    <property type="term" value="F:structural constituent of chromatin"/>
    <property type="evidence" value="ECO:0007669"/>
    <property type="project" value="InterPro"/>
</dbReference>
<dbReference type="CDD" id="cd00074">
    <property type="entry name" value="HFD_H2A"/>
    <property type="match status" value="1"/>
</dbReference>
<dbReference type="FunFam" id="1.10.20.10:FF:000173">
    <property type="entry name" value="Histone H2A"/>
    <property type="match status" value="1"/>
</dbReference>
<dbReference type="Gene3D" id="1.10.20.10">
    <property type="entry name" value="Histone, subunit A"/>
    <property type="match status" value="1"/>
</dbReference>
<dbReference type="InterPro" id="IPR009072">
    <property type="entry name" value="Histone-fold"/>
</dbReference>
<dbReference type="InterPro" id="IPR002119">
    <property type="entry name" value="Histone_H2A"/>
</dbReference>
<dbReference type="InterPro" id="IPR007125">
    <property type="entry name" value="Histone_H2A/H2B/H3"/>
</dbReference>
<dbReference type="InterPro" id="IPR032454">
    <property type="entry name" value="Histone_H2A_C"/>
</dbReference>
<dbReference type="InterPro" id="IPR032458">
    <property type="entry name" value="Histone_H2A_CS"/>
</dbReference>
<dbReference type="PANTHER" id="PTHR23430">
    <property type="entry name" value="HISTONE H2A"/>
    <property type="match status" value="1"/>
</dbReference>
<dbReference type="Pfam" id="PF00125">
    <property type="entry name" value="Histone"/>
    <property type="match status" value="1"/>
</dbReference>
<dbReference type="Pfam" id="PF16211">
    <property type="entry name" value="Histone_H2A_C"/>
    <property type="match status" value="1"/>
</dbReference>
<dbReference type="PRINTS" id="PR00620">
    <property type="entry name" value="HISTONEH2A"/>
</dbReference>
<dbReference type="SMART" id="SM00414">
    <property type="entry name" value="H2A"/>
    <property type="match status" value="1"/>
</dbReference>
<dbReference type="SUPFAM" id="SSF47113">
    <property type="entry name" value="Histone-fold"/>
    <property type="match status" value="1"/>
</dbReference>
<dbReference type="PROSITE" id="PS00046">
    <property type="entry name" value="HISTONE_H2A"/>
    <property type="match status" value="1"/>
</dbReference>
<accession>P84056</accession>
<accession>P02267</accession>
<organism>
    <name type="scientific">Rhynchosciara americana</name>
    <name type="common">Fungus gnat</name>
    <dbReference type="NCBI Taxonomy" id="7186"/>
    <lineage>
        <taxon>Eukaryota</taxon>
        <taxon>Metazoa</taxon>
        <taxon>Ecdysozoa</taxon>
        <taxon>Arthropoda</taxon>
        <taxon>Hexapoda</taxon>
        <taxon>Insecta</taxon>
        <taxon>Pterygota</taxon>
        <taxon>Neoptera</taxon>
        <taxon>Endopterygota</taxon>
        <taxon>Diptera</taxon>
        <taxon>Nematocera</taxon>
        <taxon>Sciaroidea</taxon>
        <taxon>Sciaridae</taxon>
        <taxon>Rhynchosciara</taxon>
    </lineage>
</organism>
<name>H2A_RHYAM</name>
<keyword id="KW-0007">Acetylation</keyword>
<keyword id="KW-0158">Chromosome</keyword>
<keyword id="KW-0238">DNA-binding</keyword>
<keyword id="KW-1017">Isopeptide bond</keyword>
<keyword id="KW-0488">Methylation</keyword>
<keyword id="KW-0544">Nucleosome core</keyword>
<keyword id="KW-0539">Nucleus</keyword>
<keyword id="KW-0597">Phosphoprotein</keyword>
<keyword id="KW-0832">Ubl conjugation</keyword>
<reference key="1">
    <citation type="submission" date="2001-05" db="EMBL/GenBank/DDBJ databases">
        <title>The complete sequence of the histone gene repeat of Rhynchosciara americana.</title>
        <authorList>
            <person name="Santelli R.V."/>
            <person name="Siviero F."/>
            <person name="Navarro-Cattapan L.D."/>
        </authorList>
    </citation>
    <scope>NUCLEOTIDE SEQUENCE [GENOMIC DNA]</scope>
</reference>
<feature type="initiator methionine" description="Removed" evidence="1">
    <location>
        <position position="1"/>
    </location>
</feature>
<feature type="chain" id="PRO_0000055225" description="Histone H2A">
    <location>
        <begin position="2"/>
        <end position="124"/>
    </location>
</feature>
<feature type="region of interest" description="Disordered" evidence="2">
    <location>
        <begin position="1"/>
        <end position="21"/>
    </location>
</feature>
<feature type="compositionally biased region" description="Basic residues" evidence="2">
    <location>
        <begin position="1"/>
        <end position="18"/>
    </location>
</feature>
<feature type="modified residue" description="N-acetylserine" evidence="1">
    <location>
        <position position="2"/>
    </location>
</feature>
<feature type="modified residue" description="Phosphoserine" evidence="1">
    <location>
        <position position="2"/>
    </location>
</feature>
<feature type="modified residue" description="N5-methylglutamine" evidence="1">
    <location>
        <position position="104"/>
    </location>
</feature>
<feature type="cross-link" description="Glycyl lysine isopeptide (Lys-Gly) (interchain with G-Cter in ubiquitin)" evidence="1">
    <location>
        <position position="119"/>
    </location>
</feature>
<gene>
    <name type="primary">His2A</name>
    <name type="synonym">rah2a</name>
</gene>
<protein>
    <recommendedName>
        <fullName>Histone H2A</fullName>
    </recommendedName>
</protein>
<sequence length="124" mass="13363">MSGRGKGGKVKGKAKSRSNRAGLQFPVGRIHRLLRKGNYAERVGAGAPVYLAAVMEYLAAEVLELAGNAARDNKKTRIIPRHLQLAIRNDEELNKLLSGVTIAQGGVLPNIQAVLLPKKTEKKA</sequence>
<proteinExistence type="inferred from homology"/>